<gene>
    <name type="primary">engase</name>
    <name type="ORF">zgc:158649</name>
</gene>
<evidence type="ECO:0000250" key="1"/>
<evidence type="ECO:0000256" key="2">
    <source>
        <dbReference type="SAM" id="MobiDB-lite"/>
    </source>
</evidence>
<evidence type="ECO:0000305" key="3"/>
<keyword id="KW-0963">Cytoplasm</keyword>
<keyword id="KW-0326">Glycosidase</keyword>
<keyword id="KW-0378">Hydrolase</keyword>
<keyword id="KW-1185">Reference proteome</keyword>
<name>ENASE_DANRE</name>
<comment type="function">
    <text evidence="1">Endoglycosidase that releases N-glycans from glycoproteins by cleaving the beta-1,4-glycosidic bond in the N,N'-diacetylchitobiose core. Involved in the processing of free oligosaccharides in the cytosol (By similarity).</text>
</comment>
<comment type="catalytic activity">
    <reaction>
        <text>an N(4)-(oligosaccharide-(1-&gt;3)-[oligosaccharide-(1-&gt;6)]-beta-D-Man-(1-&gt;4)-beta-D-GlcNAc-(1-&gt;4)-alpha-D-GlcNAc)-L-asparaginyl-[protein] + H2O = an oligosaccharide-(1-&gt;3)-[oligosaccharide-(1-&gt;6)]-beta-D-Man-(1-&gt;4)-D-GlcNAc + N(4)-(N-acetyl-beta-D-glucosaminyl)-L-asparaginyl-[protein]</text>
        <dbReference type="Rhea" id="RHEA:73067"/>
        <dbReference type="Rhea" id="RHEA-COMP:12603"/>
        <dbReference type="Rhea" id="RHEA-COMP:18176"/>
        <dbReference type="ChEBI" id="CHEBI:15377"/>
        <dbReference type="ChEBI" id="CHEBI:132248"/>
        <dbReference type="ChEBI" id="CHEBI:192714"/>
        <dbReference type="ChEBI" id="CHEBI:192715"/>
        <dbReference type="EC" id="3.2.1.96"/>
    </reaction>
</comment>
<comment type="subcellular location">
    <subcellularLocation>
        <location evidence="1">Cytoplasm</location>
        <location evidence="1">Cytosol</location>
    </subcellularLocation>
</comment>
<comment type="similarity">
    <text evidence="3">Belongs to the glycosyl hydrolase 85 family.</text>
</comment>
<organism>
    <name type="scientific">Danio rerio</name>
    <name type="common">Zebrafish</name>
    <name type="synonym">Brachydanio rerio</name>
    <dbReference type="NCBI Taxonomy" id="7955"/>
    <lineage>
        <taxon>Eukaryota</taxon>
        <taxon>Metazoa</taxon>
        <taxon>Chordata</taxon>
        <taxon>Craniata</taxon>
        <taxon>Vertebrata</taxon>
        <taxon>Euteleostomi</taxon>
        <taxon>Actinopterygii</taxon>
        <taxon>Neopterygii</taxon>
        <taxon>Teleostei</taxon>
        <taxon>Ostariophysi</taxon>
        <taxon>Cypriniformes</taxon>
        <taxon>Danionidae</taxon>
        <taxon>Danioninae</taxon>
        <taxon>Danio</taxon>
    </lineage>
</organism>
<dbReference type="EC" id="3.2.1.96"/>
<dbReference type="EMBL" id="BC129351">
    <property type="protein sequence ID" value="AAI29352.1"/>
    <property type="molecule type" value="mRNA"/>
</dbReference>
<dbReference type="RefSeq" id="NP_001074047.2">
    <property type="nucleotide sequence ID" value="NM_001080578.2"/>
</dbReference>
<dbReference type="SMR" id="A1L251"/>
<dbReference type="FunCoup" id="A1L251">
    <property type="interactions" value="58"/>
</dbReference>
<dbReference type="STRING" id="7955.ENSDARP00000005952"/>
<dbReference type="CAZy" id="GH85">
    <property type="family name" value="Glycoside Hydrolase Family 85"/>
</dbReference>
<dbReference type="PaxDb" id="7955-ENSDARP00000005952"/>
<dbReference type="PeptideAtlas" id="A1L251"/>
<dbReference type="GeneID" id="561239"/>
<dbReference type="KEGG" id="dre:561239"/>
<dbReference type="AGR" id="ZFIN:ZDB-GENE-070112-1332"/>
<dbReference type="CTD" id="64772"/>
<dbReference type="ZFIN" id="ZDB-GENE-070112-1332">
    <property type="gene designation" value="engase"/>
</dbReference>
<dbReference type="eggNOG" id="KOG2331">
    <property type="taxonomic scope" value="Eukaryota"/>
</dbReference>
<dbReference type="InParanoid" id="A1L251"/>
<dbReference type="OrthoDB" id="284473at2759"/>
<dbReference type="Reactome" id="R-DRE-532668">
    <property type="pathway name" value="N-glycan trimming in the ER and Calnexin/Calreticulin cycle"/>
</dbReference>
<dbReference type="PRO" id="PR:A1L251"/>
<dbReference type="Proteomes" id="UP000000437">
    <property type="component" value="Chromosome 3"/>
</dbReference>
<dbReference type="GO" id="GO:0005829">
    <property type="term" value="C:cytosol"/>
    <property type="evidence" value="ECO:0007669"/>
    <property type="project" value="UniProtKB-SubCell"/>
</dbReference>
<dbReference type="GO" id="GO:0033925">
    <property type="term" value="F:mannosyl-glycoprotein endo-beta-N-acetylglucosaminidase activity"/>
    <property type="evidence" value="ECO:0000318"/>
    <property type="project" value="GO_Central"/>
</dbReference>
<dbReference type="GO" id="GO:0006491">
    <property type="term" value="P:N-glycan processing"/>
    <property type="evidence" value="ECO:0000318"/>
    <property type="project" value="GO_Central"/>
</dbReference>
<dbReference type="CDD" id="cd06547">
    <property type="entry name" value="GH85_ENGase"/>
    <property type="match status" value="1"/>
</dbReference>
<dbReference type="FunFam" id="3.20.20.80:FF:000043">
    <property type="entry name" value="cytosolic endo-beta-N-acetylglucosaminidase"/>
    <property type="match status" value="1"/>
</dbReference>
<dbReference type="Gene3D" id="2.60.120.260">
    <property type="entry name" value="Galactose-binding domain-like"/>
    <property type="match status" value="1"/>
</dbReference>
<dbReference type="Gene3D" id="3.20.20.80">
    <property type="entry name" value="Glycosidases"/>
    <property type="match status" value="1"/>
</dbReference>
<dbReference type="InterPro" id="IPR032979">
    <property type="entry name" value="ENGase"/>
</dbReference>
<dbReference type="InterPro" id="IPR005201">
    <property type="entry name" value="Glyco_hydro_85"/>
</dbReference>
<dbReference type="PANTHER" id="PTHR13246:SF1">
    <property type="entry name" value="CYTOSOLIC ENDO-BETA-N-ACETYLGLUCOSAMINIDASE"/>
    <property type="match status" value="1"/>
</dbReference>
<dbReference type="PANTHER" id="PTHR13246">
    <property type="entry name" value="ENDO BETA N-ACETYLGLUCOSAMINIDASE"/>
    <property type="match status" value="1"/>
</dbReference>
<dbReference type="Pfam" id="PF03644">
    <property type="entry name" value="Glyco_hydro_85"/>
    <property type="match status" value="1"/>
</dbReference>
<accession>A1L251</accession>
<sequence length="713" mass="80255">MIARKRKSNGSETTSGKIPKDDVSSESCLDQPADESVHEVVTFEPSTLPSVHYDPDTTEPISCSLKSLDELLSWKRNEASIFNVSSVPLASRYPPLESCPRRTLVSHDMMGGYLEDRFIQGAEVETPYAFYHWEYIDIFNYFSHQMVTIPPAVWTNAAHRHGVLSIGTFITEWTDGAKTCEAFLADEESYRAAADKLVQISHCNGFDGWLINIENELSETAVNNTGPFLRYLTDQMHERVPGSVVIWYDSVLKDGKLLWQNELNDNNRMFFDACDGFFTNYNWTEQSLEGMKSYAAAQGRFADIYVGVDVFARGKVIGGKYETNKALELIRKYDLSTAIFAPDWVYECHEKADFRQNQDKFWSLLSDFLYIHRPSSNLPFVSSFCQGFGKSLYWRGKVETERSWFNLHAQEIQPLYLSESFGNGGWLRTRGCSEDAWIGGSSLMLEGMIPSGLSDVCARIFSLHVPLAARTFVSFVFKPPVGVKVSLELKTIDGPLCTFDGTEEIASRSVFPEALAESNQLVEQFAQNCGQWASDGWATRCFLLKMIGCSLREVCIRVSRDGGDEDINFNCRIGEIMLLDADNLQAPLQSVEGICVNDVVWQTGVLKGDGHTLKVLLNATLRWQYPTRQVRHFRIHWRHLRGPDPRIPSGPLTLIGRSYSALYRVVELEVPAAPGLIELVVEPVSKEGFSVPEAQWGRQTLSYSQSPSGNPSH</sequence>
<proteinExistence type="evidence at transcript level"/>
<reference key="1">
    <citation type="submission" date="2006-12" db="EMBL/GenBank/DDBJ databases">
        <authorList>
            <consortium name="NIH - Zebrafish Gene Collection (ZGC) project"/>
        </authorList>
    </citation>
    <scope>NUCLEOTIDE SEQUENCE [LARGE SCALE MRNA]</scope>
    <source>
        <tissue>Olfactory epithelium</tissue>
    </source>
</reference>
<protein>
    <recommendedName>
        <fullName>Cytosolic endo-beta-N-acetylglucosaminidase</fullName>
        <shortName>ENGase</shortName>
        <ecNumber>3.2.1.96</ecNumber>
    </recommendedName>
</protein>
<feature type="chain" id="PRO_0000328870" description="Cytosolic endo-beta-N-acetylglucosaminidase">
    <location>
        <begin position="1"/>
        <end position="713"/>
    </location>
</feature>
<feature type="domain" description="BRCT">
    <location>
        <begin position="270"/>
        <end position="362"/>
    </location>
</feature>
<feature type="region of interest" description="Disordered" evidence="2">
    <location>
        <begin position="1"/>
        <end position="36"/>
    </location>
</feature>